<organism>
    <name type="scientific">Rickettsia canadensis (strain McKiel)</name>
    <dbReference type="NCBI Taxonomy" id="293613"/>
    <lineage>
        <taxon>Bacteria</taxon>
        <taxon>Pseudomonadati</taxon>
        <taxon>Pseudomonadota</taxon>
        <taxon>Alphaproteobacteria</taxon>
        <taxon>Rickettsiales</taxon>
        <taxon>Rickettsiaceae</taxon>
        <taxon>Rickettsieae</taxon>
        <taxon>Rickettsia</taxon>
        <taxon>belli group</taxon>
    </lineage>
</organism>
<dbReference type="EMBL" id="CP000409">
    <property type="protein sequence ID" value="ABV72991.1"/>
    <property type="molecule type" value="Genomic_DNA"/>
</dbReference>
<dbReference type="RefSeq" id="WP_012148192.1">
    <property type="nucleotide sequence ID" value="NC_009879.1"/>
</dbReference>
<dbReference type="SMR" id="A8EXA8"/>
<dbReference type="STRING" id="293613.A1E_00190"/>
<dbReference type="KEGG" id="rcm:A1E_00190"/>
<dbReference type="eggNOG" id="COG0238">
    <property type="taxonomic scope" value="Bacteria"/>
</dbReference>
<dbReference type="HOGENOM" id="CLU_148710_2_1_5"/>
<dbReference type="Proteomes" id="UP000007056">
    <property type="component" value="Chromosome"/>
</dbReference>
<dbReference type="GO" id="GO:0022627">
    <property type="term" value="C:cytosolic small ribosomal subunit"/>
    <property type="evidence" value="ECO:0007669"/>
    <property type="project" value="TreeGrafter"/>
</dbReference>
<dbReference type="GO" id="GO:0070181">
    <property type="term" value="F:small ribosomal subunit rRNA binding"/>
    <property type="evidence" value="ECO:0007669"/>
    <property type="project" value="TreeGrafter"/>
</dbReference>
<dbReference type="GO" id="GO:0003735">
    <property type="term" value="F:structural constituent of ribosome"/>
    <property type="evidence" value="ECO:0007669"/>
    <property type="project" value="InterPro"/>
</dbReference>
<dbReference type="GO" id="GO:0006412">
    <property type="term" value="P:translation"/>
    <property type="evidence" value="ECO:0007669"/>
    <property type="project" value="UniProtKB-UniRule"/>
</dbReference>
<dbReference type="Gene3D" id="4.10.640.10">
    <property type="entry name" value="Ribosomal protein S18"/>
    <property type="match status" value="1"/>
</dbReference>
<dbReference type="HAMAP" id="MF_00270">
    <property type="entry name" value="Ribosomal_bS18"/>
    <property type="match status" value="1"/>
</dbReference>
<dbReference type="InterPro" id="IPR001648">
    <property type="entry name" value="Ribosomal_bS18"/>
</dbReference>
<dbReference type="InterPro" id="IPR018275">
    <property type="entry name" value="Ribosomal_bS18_CS"/>
</dbReference>
<dbReference type="InterPro" id="IPR036870">
    <property type="entry name" value="Ribosomal_bS18_sf"/>
</dbReference>
<dbReference type="NCBIfam" id="TIGR00165">
    <property type="entry name" value="S18"/>
    <property type="match status" value="1"/>
</dbReference>
<dbReference type="PANTHER" id="PTHR13479">
    <property type="entry name" value="30S RIBOSOMAL PROTEIN S18"/>
    <property type="match status" value="1"/>
</dbReference>
<dbReference type="PANTHER" id="PTHR13479:SF40">
    <property type="entry name" value="SMALL RIBOSOMAL SUBUNIT PROTEIN BS18M"/>
    <property type="match status" value="1"/>
</dbReference>
<dbReference type="Pfam" id="PF01084">
    <property type="entry name" value="Ribosomal_S18"/>
    <property type="match status" value="1"/>
</dbReference>
<dbReference type="PRINTS" id="PR00974">
    <property type="entry name" value="RIBOSOMALS18"/>
</dbReference>
<dbReference type="SUPFAM" id="SSF46911">
    <property type="entry name" value="Ribosomal protein S18"/>
    <property type="match status" value="1"/>
</dbReference>
<dbReference type="PROSITE" id="PS00057">
    <property type="entry name" value="RIBOSOMAL_S18"/>
    <property type="match status" value="1"/>
</dbReference>
<name>RS18_RICCK</name>
<comment type="function">
    <text evidence="1">Binds as a heterodimer with protein bS6 to the central domain of the 16S rRNA, where it helps stabilize the platform of the 30S subunit.</text>
</comment>
<comment type="subunit">
    <text evidence="1">Part of the 30S ribosomal subunit. Forms a tight heterodimer with protein bS6.</text>
</comment>
<comment type="similarity">
    <text evidence="1">Belongs to the bacterial ribosomal protein bS18 family.</text>
</comment>
<evidence type="ECO:0000255" key="1">
    <source>
        <dbReference type="HAMAP-Rule" id="MF_00270"/>
    </source>
</evidence>
<evidence type="ECO:0000305" key="2"/>
<gene>
    <name evidence="1" type="primary">rpsR</name>
    <name type="ordered locus">A1E_00190</name>
</gene>
<keyword id="KW-0687">Ribonucleoprotein</keyword>
<keyword id="KW-0689">Ribosomal protein</keyword>
<keyword id="KW-0694">RNA-binding</keyword>
<keyword id="KW-0699">rRNA-binding</keyword>
<reference key="1">
    <citation type="submission" date="2007-09" db="EMBL/GenBank/DDBJ databases">
        <title>Complete genome sequence of Rickettsia canadensis.</title>
        <authorList>
            <person name="Madan A."/>
            <person name="Fahey J."/>
            <person name="Helton E."/>
            <person name="Ketteman M."/>
            <person name="Madan A."/>
            <person name="Rodrigues S."/>
            <person name="Sanchez A."/>
            <person name="Whiting M."/>
            <person name="Dasch G."/>
            <person name="Eremeeva M."/>
        </authorList>
    </citation>
    <scope>NUCLEOTIDE SEQUENCE [LARGE SCALE GENOMIC DNA]</scope>
    <source>
        <strain>McKiel</strain>
    </source>
</reference>
<accession>A8EXA8</accession>
<protein>
    <recommendedName>
        <fullName evidence="1">Small ribosomal subunit protein bS18</fullName>
    </recommendedName>
    <alternativeName>
        <fullName evidence="2">30S ribosomal protein S18</fullName>
    </alternativeName>
</protein>
<feature type="chain" id="PRO_1000003593" description="Small ribosomal subunit protein bS18">
    <location>
        <begin position="1"/>
        <end position="95"/>
    </location>
</feature>
<proteinExistence type="inferred from homology"/>
<sequence>MLKSNNTSEATTRKVGDKTAKKVFFRRRKGCPLSVPNAPVIDYKNPELLIKFVSEGGRMLPSRITNVCAKKQRKLNNAIKIARILALLPFVFQAK</sequence>